<evidence type="ECO:0000255" key="1">
    <source>
        <dbReference type="HAMAP-Rule" id="MF_01959"/>
    </source>
</evidence>
<evidence type="ECO:0000256" key="2">
    <source>
        <dbReference type="SAM" id="MobiDB-lite"/>
    </source>
</evidence>
<sequence length="159" mass="17698">MNIRRKNRLWIACAVLAGLALTIGLVLYALRSNIDLFYTPGEILYGKRETQQMPEVGQRLRVGGMVMPGSVQRDPNSLKVTFTIYDAEGSVDVSYEGILPDLFREGQGVVVQGELEKGNHILAKEVLAKHDENYTPPEVEKAMEANHRRPASVYKDPAS</sequence>
<accession>P69492</accession>
<accession>P33928</accession>
<feature type="chain" id="PRO_0000201577" description="Cytochrome c-type biogenesis protein CcmE">
    <location>
        <begin position="1"/>
        <end position="159"/>
    </location>
</feature>
<feature type="topological domain" description="Cytoplasmic" evidence="1">
    <location>
        <begin position="1"/>
        <end position="8"/>
    </location>
</feature>
<feature type="transmembrane region" description="Helical; Signal-anchor for type II membrane protein" evidence="1">
    <location>
        <begin position="9"/>
        <end position="29"/>
    </location>
</feature>
<feature type="topological domain" description="Periplasmic" evidence="1">
    <location>
        <begin position="30"/>
        <end position="159"/>
    </location>
</feature>
<feature type="region of interest" description="Disordered" evidence="2">
    <location>
        <begin position="132"/>
        <end position="159"/>
    </location>
</feature>
<feature type="compositionally biased region" description="Basic and acidic residues" evidence="2">
    <location>
        <begin position="132"/>
        <end position="147"/>
    </location>
</feature>
<feature type="binding site" description="covalent" evidence="1">
    <location>
        <position position="130"/>
    </location>
    <ligand>
        <name>heme</name>
        <dbReference type="ChEBI" id="CHEBI:30413"/>
    </ligand>
</feature>
<feature type="binding site" description="axial binding residue" evidence="1">
    <location>
        <position position="134"/>
    </location>
    <ligand>
        <name>heme</name>
        <dbReference type="ChEBI" id="CHEBI:30413"/>
    </ligand>
    <ligandPart>
        <name>Fe</name>
        <dbReference type="ChEBI" id="CHEBI:18248"/>
    </ligandPart>
</feature>
<reference key="1">
    <citation type="journal article" date="2001" name="Nature">
        <title>Genome sequence of enterohaemorrhagic Escherichia coli O157:H7.</title>
        <authorList>
            <person name="Perna N.T."/>
            <person name="Plunkett G. III"/>
            <person name="Burland V."/>
            <person name="Mau B."/>
            <person name="Glasner J.D."/>
            <person name="Rose D.J."/>
            <person name="Mayhew G.F."/>
            <person name="Evans P.S."/>
            <person name="Gregor J."/>
            <person name="Kirkpatrick H.A."/>
            <person name="Posfai G."/>
            <person name="Hackett J."/>
            <person name="Klink S."/>
            <person name="Boutin A."/>
            <person name="Shao Y."/>
            <person name="Miller L."/>
            <person name="Grotbeck E.J."/>
            <person name="Davis N.W."/>
            <person name="Lim A."/>
            <person name="Dimalanta E.T."/>
            <person name="Potamousis K."/>
            <person name="Apodaca J."/>
            <person name="Anantharaman T.S."/>
            <person name="Lin J."/>
            <person name="Yen G."/>
            <person name="Schwartz D.C."/>
            <person name="Welch R.A."/>
            <person name="Blattner F.R."/>
        </authorList>
    </citation>
    <scope>NUCLEOTIDE SEQUENCE [LARGE SCALE GENOMIC DNA]</scope>
    <source>
        <strain>O157:H7 / EDL933 / ATCC 700927 / EHEC</strain>
    </source>
</reference>
<reference key="2">
    <citation type="journal article" date="2001" name="DNA Res.">
        <title>Complete genome sequence of enterohemorrhagic Escherichia coli O157:H7 and genomic comparison with a laboratory strain K-12.</title>
        <authorList>
            <person name="Hayashi T."/>
            <person name="Makino K."/>
            <person name="Ohnishi M."/>
            <person name="Kurokawa K."/>
            <person name="Ishii K."/>
            <person name="Yokoyama K."/>
            <person name="Han C.-G."/>
            <person name="Ohtsubo E."/>
            <person name="Nakayama K."/>
            <person name="Murata T."/>
            <person name="Tanaka M."/>
            <person name="Tobe T."/>
            <person name="Iida T."/>
            <person name="Takami H."/>
            <person name="Honda T."/>
            <person name="Sasakawa C."/>
            <person name="Ogasawara N."/>
            <person name="Yasunaga T."/>
            <person name="Kuhara S."/>
            <person name="Shiba T."/>
            <person name="Hattori M."/>
            <person name="Shinagawa H."/>
        </authorList>
    </citation>
    <scope>NUCLEOTIDE SEQUENCE [LARGE SCALE GENOMIC DNA]</scope>
    <source>
        <strain>O157:H7 / Sakai / RIMD 0509952 / EHEC</strain>
    </source>
</reference>
<dbReference type="EMBL" id="AE005174">
    <property type="protein sequence ID" value="AAG57332.1"/>
    <property type="molecule type" value="Genomic_DNA"/>
</dbReference>
<dbReference type="EMBL" id="BA000007">
    <property type="protein sequence ID" value="BAB36509.1"/>
    <property type="molecule type" value="Genomic_DNA"/>
</dbReference>
<dbReference type="PIR" id="F91014">
    <property type="entry name" value="F91014"/>
</dbReference>
<dbReference type="PIR" id="H85858">
    <property type="entry name" value="H85858"/>
</dbReference>
<dbReference type="RefSeq" id="NP_311113.1">
    <property type="nucleotide sequence ID" value="NC_002695.1"/>
</dbReference>
<dbReference type="RefSeq" id="WP_001026418.1">
    <property type="nucleotide sequence ID" value="NZ_VOAI01000001.1"/>
</dbReference>
<dbReference type="SMR" id="P69492"/>
<dbReference type="STRING" id="155864.Z3454"/>
<dbReference type="GeneID" id="86860369"/>
<dbReference type="GeneID" id="916792"/>
<dbReference type="KEGG" id="ece:Z3454"/>
<dbReference type="KEGG" id="ecs:ECs_3086"/>
<dbReference type="PATRIC" id="fig|386585.9.peg.3220"/>
<dbReference type="eggNOG" id="COG2332">
    <property type="taxonomic scope" value="Bacteria"/>
</dbReference>
<dbReference type="HOGENOM" id="CLU_079503_1_0_6"/>
<dbReference type="OMA" id="HVEFAVH"/>
<dbReference type="Proteomes" id="UP000000558">
    <property type="component" value="Chromosome"/>
</dbReference>
<dbReference type="Proteomes" id="UP000002519">
    <property type="component" value="Chromosome"/>
</dbReference>
<dbReference type="GO" id="GO:0005886">
    <property type="term" value="C:plasma membrane"/>
    <property type="evidence" value="ECO:0007669"/>
    <property type="project" value="UniProtKB-SubCell"/>
</dbReference>
<dbReference type="GO" id="GO:0020037">
    <property type="term" value="F:heme binding"/>
    <property type="evidence" value="ECO:0007669"/>
    <property type="project" value="InterPro"/>
</dbReference>
<dbReference type="GO" id="GO:0046872">
    <property type="term" value="F:metal ion binding"/>
    <property type="evidence" value="ECO:0007669"/>
    <property type="project" value="UniProtKB-KW"/>
</dbReference>
<dbReference type="GO" id="GO:0017004">
    <property type="term" value="P:cytochrome complex assembly"/>
    <property type="evidence" value="ECO:0007669"/>
    <property type="project" value="UniProtKB-KW"/>
</dbReference>
<dbReference type="FunFam" id="2.40.50.140:FF:000104">
    <property type="entry name" value="Cytochrome c-type biogenesis protein CcmE"/>
    <property type="match status" value="1"/>
</dbReference>
<dbReference type="Gene3D" id="2.40.50.140">
    <property type="entry name" value="Nucleic acid-binding proteins"/>
    <property type="match status" value="1"/>
</dbReference>
<dbReference type="HAMAP" id="MF_01959">
    <property type="entry name" value="CcmE"/>
    <property type="match status" value="1"/>
</dbReference>
<dbReference type="InterPro" id="IPR004329">
    <property type="entry name" value="CcmE"/>
</dbReference>
<dbReference type="InterPro" id="IPR036127">
    <property type="entry name" value="CcmE-like_sf"/>
</dbReference>
<dbReference type="InterPro" id="IPR012340">
    <property type="entry name" value="NA-bd_OB-fold"/>
</dbReference>
<dbReference type="NCBIfam" id="NF009635">
    <property type="entry name" value="PRK13150.1"/>
    <property type="match status" value="1"/>
</dbReference>
<dbReference type="NCBIfam" id="NF009638">
    <property type="entry name" value="PRK13165.1"/>
    <property type="match status" value="1"/>
</dbReference>
<dbReference type="NCBIfam" id="NF009727">
    <property type="entry name" value="PRK13254.1-1"/>
    <property type="match status" value="1"/>
</dbReference>
<dbReference type="NCBIfam" id="NF009729">
    <property type="entry name" value="PRK13254.1-3"/>
    <property type="match status" value="1"/>
</dbReference>
<dbReference type="PANTHER" id="PTHR34128">
    <property type="entry name" value="CYTOCHROME C-TYPE BIOGENESIS PROTEIN CCME HOMOLOG, MITOCHONDRIAL"/>
    <property type="match status" value="1"/>
</dbReference>
<dbReference type="PANTHER" id="PTHR34128:SF2">
    <property type="entry name" value="CYTOCHROME C-TYPE BIOGENESIS PROTEIN CCME HOMOLOG, MITOCHONDRIAL"/>
    <property type="match status" value="1"/>
</dbReference>
<dbReference type="Pfam" id="PF03100">
    <property type="entry name" value="CcmE"/>
    <property type="match status" value="1"/>
</dbReference>
<dbReference type="SUPFAM" id="SSF82093">
    <property type="entry name" value="Heme chaperone CcmE"/>
    <property type="match status" value="1"/>
</dbReference>
<comment type="function">
    <text evidence="1">Heme chaperone required for the biogenesis of c-type cytochromes. Transiently binds heme delivered by CcmC and transfers the heme to apo-cytochromes in a process facilitated by CcmF and CcmH.</text>
</comment>
<comment type="subcellular location">
    <subcellularLocation>
        <location evidence="1">Cell inner membrane</location>
        <topology evidence="1">Single-pass type II membrane protein</topology>
        <orientation evidence="1">Periplasmic side</orientation>
    </subcellularLocation>
</comment>
<comment type="similarity">
    <text evidence="1">Belongs to the CcmE/CycJ family.</text>
</comment>
<gene>
    <name evidence="1" type="primary">ccmE</name>
    <name evidence="1" type="synonym">cycJ</name>
    <name type="ordered locus">Z3454</name>
    <name type="ordered locus">ECs3086</name>
</gene>
<organism>
    <name type="scientific">Escherichia coli O157:H7</name>
    <dbReference type="NCBI Taxonomy" id="83334"/>
    <lineage>
        <taxon>Bacteria</taxon>
        <taxon>Pseudomonadati</taxon>
        <taxon>Pseudomonadota</taxon>
        <taxon>Gammaproteobacteria</taxon>
        <taxon>Enterobacterales</taxon>
        <taxon>Enterobacteriaceae</taxon>
        <taxon>Escherichia</taxon>
    </lineage>
</organism>
<protein>
    <recommendedName>
        <fullName evidence="1">Cytochrome c-type biogenesis protein CcmE</fullName>
    </recommendedName>
    <alternativeName>
        <fullName evidence="1">Cytochrome c maturation protein E</fullName>
    </alternativeName>
    <alternativeName>
        <fullName evidence="1">Heme chaperone CcmE</fullName>
    </alternativeName>
</protein>
<name>CCME_ECO57</name>
<keyword id="KW-0997">Cell inner membrane</keyword>
<keyword id="KW-1003">Cell membrane</keyword>
<keyword id="KW-0201">Cytochrome c-type biogenesis</keyword>
<keyword id="KW-0349">Heme</keyword>
<keyword id="KW-0408">Iron</keyword>
<keyword id="KW-0472">Membrane</keyword>
<keyword id="KW-0479">Metal-binding</keyword>
<keyword id="KW-1185">Reference proteome</keyword>
<keyword id="KW-0735">Signal-anchor</keyword>
<keyword id="KW-0812">Transmembrane</keyword>
<keyword id="KW-1133">Transmembrane helix</keyword>
<proteinExistence type="inferred from homology"/>